<sequence length="336" mass="36452">MLHGVLLIALFSCAAFYIGEMSFVRSISFSPMIVGIILGMLYANSLRNHLPETWVPGIQFCSKKILRIGIILYGFRLTFQDVMAIGLPAMLIDVIIVAVTICGGIYLGKLLKMDRGIALLTSIGSGICGAAAILGAESTIKAKPYKTAVSVSTVVIFGTISMFLYPFLYRNGFCALTPDQMGIYTGATLHEVAHVVGAGDAMGNGISDSAIIVKMIRVMMLVPVLLITTYLVARARKRQVQKGQKFQKIAVPWFAIGFMGVIAFNSFDLLPAQLVAGINTLDTFLLTMAMTALGTETSIDKFRKAGAKPFVLALLLYVWLVVGGYFLVKYLTPYLM</sequence>
<evidence type="ECO:0000255" key="1"/>
<evidence type="ECO:0000305" key="2"/>
<organism>
    <name type="scientific">Bacteroides thetaiotaomicron (strain ATCC 29148 / DSM 2079 / JCM 5827 / CCUG 10774 / NCTC 10582 / VPI-5482 / E50)</name>
    <dbReference type="NCBI Taxonomy" id="226186"/>
    <lineage>
        <taxon>Bacteria</taxon>
        <taxon>Pseudomonadati</taxon>
        <taxon>Bacteroidota</taxon>
        <taxon>Bacteroidia</taxon>
        <taxon>Bacteroidales</taxon>
        <taxon>Bacteroidaceae</taxon>
        <taxon>Bacteroides</taxon>
    </lineage>
</organism>
<proteinExistence type="inferred from homology"/>
<dbReference type="EMBL" id="AE015928">
    <property type="protein sequence ID" value="AAO77026.1"/>
    <property type="molecule type" value="Genomic_DNA"/>
</dbReference>
<dbReference type="RefSeq" id="NP_810832.1">
    <property type="nucleotide sequence ID" value="NC_004663.1"/>
</dbReference>
<dbReference type="FunCoup" id="Q8A6G5">
    <property type="interactions" value="76"/>
</dbReference>
<dbReference type="PaxDb" id="226186-BT_1919"/>
<dbReference type="EnsemblBacteria" id="AAO77026">
    <property type="protein sequence ID" value="AAO77026"/>
    <property type="gene ID" value="BT_1919"/>
</dbReference>
<dbReference type="KEGG" id="bth:BT_1919"/>
<dbReference type="PATRIC" id="fig|226186.12.peg.1971"/>
<dbReference type="eggNOG" id="COG2855">
    <property type="taxonomic scope" value="Bacteria"/>
</dbReference>
<dbReference type="HOGENOM" id="CLU_033541_0_0_10"/>
<dbReference type="InParanoid" id="Q8A6G5"/>
<dbReference type="OrthoDB" id="9811391at2"/>
<dbReference type="Proteomes" id="UP000001414">
    <property type="component" value="Chromosome"/>
</dbReference>
<dbReference type="GO" id="GO:0005886">
    <property type="term" value="C:plasma membrane"/>
    <property type="evidence" value="ECO:0000318"/>
    <property type="project" value="GO_Central"/>
</dbReference>
<dbReference type="InterPro" id="IPR018383">
    <property type="entry name" value="UPF0324_pro"/>
</dbReference>
<dbReference type="InterPro" id="IPR004630">
    <property type="entry name" value="UPF0324_YeiH-like"/>
</dbReference>
<dbReference type="NCBIfam" id="TIGR00698">
    <property type="entry name" value="YeiH family putative sulfate export transporter"/>
    <property type="match status" value="1"/>
</dbReference>
<dbReference type="PANTHER" id="PTHR30106">
    <property type="entry name" value="INNER MEMBRANE PROTEIN YEIH-RELATED"/>
    <property type="match status" value="1"/>
</dbReference>
<dbReference type="PANTHER" id="PTHR30106:SF2">
    <property type="entry name" value="UPF0324 INNER MEMBRANE PROTEIN YEIH"/>
    <property type="match status" value="1"/>
</dbReference>
<dbReference type="Pfam" id="PF03601">
    <property type="entry name" value="Cons_hypoth698"/>
    <property type="match status" value="1"/>
</dbReference>
<feature type="chain" id="PRO_0000157393" description="UPF0324 membrane protein BT_1919">
    <location>
        <begin position="1"/>
        <end position="336"/>
    </location>
</feature>
<feature type="transmembrane region" description="Helical" evidence="1">
    <location>
        <begin position="2"/>
        <end position="19"/>
    </location>
</feature>
<feature type="transmembrane region" description="Helical" evidence="1">
    <location>
        <begin position="23"/>
        <end position="45"/>
    </location>
</feature>
<feature type="transmembrane region" description="Helical" evidence="1">
    <location>
        <begin position="85"/>
        <end position="107"/>
    </location>
</feature>
<feature type="transmembrane region" description="Helical" evidence="1">
    <location>
        <begin position="117"/>
        <end position="134"/>
    </location>
</feature>
<feature type="transmembrane region" description="Helical" evidence="1">
    <location>
        <begin position="147"/>
        <end position="169"/>
    </location>
</feature>
<feature type="transmembrane region" description="Helical" evidence="1">
    <location>
        <begin position="210"/>
        <end position="232"/>
    </location>
</feature>
<feature type="transmembrane region" description="Helical" evidence="1">
    <location>
        <begin position="253"/>
        <end position="275"/>
    </location>
</feature>
<feature type="transmembrane region" description="Helical" evidence="1">
    <location>
        <begin position="310"/>
        <end position="332"/>
    </location>
</feature>
<accession>Q8A6G5</accession>
<gene>
    <name type="ordered locus">BT_1919</name>
</gene>
<keyword id="KW-1003">Cell membrane</keyword>
<keyword id="KW-0472">Membrane</keyword>
<keyword id="KW-1185">Reference proteome</keyword>
<keyword id="KW-0812">Transmembrane</keyword>
<keyword id="KW-1133">Transmembrane helix</keyword>
<reference key="1">
    <citation type="journal article" date="2003" name="Science">
        <title>A genomic view of the human-Bacteroides thetaiotaomicron symbiosis.</title>
        <authorList>
            <person name="Xu J."/>
            <person name="Bjursell M.K."/>
            <person name="Himrod J."/>
            <person name="Deng S."/>
            <person name="Carmichael L.K."/>
            <person name="Chiang H.C."/>
            <person name="Hooper L.V."/>
            <person name="Gordon J.I."/>
        </authorList>
    </citation>
    <scope>NUCLEOTIDE SEQUENCE [LARGE SCALE GENOMIC DNA]</scope>
    <source>
        <strain>ATCC 29148 / DSM 2079 / JCM 5827 / CCUG 10774 / NCTC 10582 / VPI-5482 / E50</strain>
    </source>
</reference>
<protein>
    <recommendedName>
        <fullName>UPF0324 membrane protein BT_1919</fullName>
    </recommendedName>
</protein>
<name>Y1919_BACTN</name>
<comment type="subcellular location">
    <subcellularLocation>
        <location evidence="2">Cell membrane</location>
        <topology evidence="2">Multi-pass membrane protein</topology>
    </subcellularLocation>
</comment>
<comment type="similarity">
    <text evidence="2">Belongs to the UPF0324 family.</text>
</comment>